<dbReference type="EMBL" id="CP001113">
    <property type="protein sequence ID" value="ACF61310.1"/>
    <property type="molecule type" value="Genomic_DNA"/>
</dbReference>
<dbReference type="RefSeq" id="WP_001196659.1">
    <property type="nucleotide sequence ID" value="NZ_CCMR01000001.1"/>
</dbReference>
<dbReference type="SMR" id="B4T0R8"/>
<dbReference type="KEGG" id="see:SNSL254_A2738"/>
<dbReference type="HOGENOM" id="CLU_005965_2_1_6"/>
<dbReference type="Proteomes" id="UP000008824">
    <property type="component" value="Chromosome"/>
</dbReference>
<dbReference type="GO" id="GO:0005524">
    <property type="term" value="F:ATP binding"/>
    <property type="evidence" value="ECO:0007669"/>
    <property type="project" value="UniProtKB-KW"/>
</dbReference>
<dbReference type="GO" id="GO:0016887">
    <property type="term" value="F:ATP hydrolysis activity"/>
    <property type="evidence" value="ECO:0007669"/>
    <property type="project" value="UniProtKB-UniRule"/>
</dbReference>
<dbReference type="GO" id="GO:0140662">
    <property type="term" value="F:ATP-dependent protein folding chaperone"/>
    <property type="evidence" value="ECO:0007669"/>
    <property type="project" value="InterPro"/>
</dbReference>
<dbReference type="GO" id="GO:0051082">
    <property type="term" value="F:unfolded protein binding"/>
    <property type="evidence" value="ECO:0007669"/>
    <property type="project" value="InterPro"/>
</dbReference>
<dbReference type="GO" id="GO:0016226">
    <property type="term" value="P:iron-sulfur cluster assembly"/>
    <property type="evidence" value="ECO:0007669"/>
    <property type="project" value="InterPro"/>
</dbReference>
<dbReference type="CDD" id="cd10236">
    <property type="entry name" value="ASKHA_NBD_HSP70_HscA"/>
    <property type="match status" value="1"/>
</dbReference>
<dbReference type="FunFam" id="1.20.1270.10:FF:000006">
    <property type="entry name" value="Chaperone protein HscA"/>
    <property type="match status" value="1"/>
</dbReference>
<dbReference type="FunFam" id="3.30.420.40:FF:000046">
    <property type="entry name" value="Chaperone protein HscA"/>
    <property type="match status" value="1"/>
</dbReference>
<dbReference type="FunFam" id="3.90.640.10:FF:000013">
    <property type="entry name" value="Chaperone protein HscA"/>
    <property type="match status" value="1"/>
</dbReference>
<dbReference type="FunFam" id="2.60.34.10:FF:000005">
    <property type="entry name" value="Chaperone protein HscA homolog"/>
    <property type="match status" value="1"/>
</dbReference>
<dbReference type="Gene3D" id="1.20.1270.10">
    <property type="match status" value="1"/>
</dbReference>
<dbReference type="Gene3D" id="3.30.420.40">
    <property type="match status" value="2"/>
</dbReference>
<dbReference type="Gene3D" id="3.90.640.10">
    <property type="entry name" value="Actin, Chain A, domain 4"/>
    <property type="match status" value="1"/>
</dbReference>
<dbReference type="Gene3D" id="2.60.34.10">
    <property type="entry name" value="Substrate Binding Domain Of DNAk, Chain A, domain 1"/>
    <property type="match status" value="1"/>
</dbReference>
<dbReference type="HAMAP" id="MF_00679">
    <property type="entry name" value="HscA"/>
    <property type="match status" value="1"/>
</dbReference>
<dbReference type="InterPro" id="IPR043129">
    <property type="entry name" value="ATPase_NBD"/>
</dbReference>
<dbReference type="InterPro" id="IPR018181">
    <property type="entry name" value="Heat_shock_70_CS"/>
</dbReference>
<dbReference type="InterPro" id="IPR042039">
    <property type="entry name" value="HscA_NBD"/>
</dbReference>
<dbReference type="InterPro" id="IPR029048">
    <property type="entry name" value="HSP70_C_sf"/>
</dbReference>
<dbReference type="InterPro" id="IPR029047">
    <property type="entry name" value="HSP70_peptide-bd_sf"/>
</dbReference>
<dbReference type="InterPro" id="IPR013126">
    <property type="entry name" value="Hsp_70_fam"/>
</dbReference>
<dbReference type="InterPro" id="IPR010236">
    <property type="entry name" value="ISC_FeS_clus_asmbl_HscA"/>
</dbReference>
<dbReference type="NCBIfam" id="TIGR01991">
    <property type="entry name" value="HscA"/>
    <property type="match status" value="1"/>
</dbReference>
<dbReference type="NCBIfam" id="NF003520">
    <property type="entry name" value="PRK05183.1"/>
    <property type="match status" value="1"/>
</dbReference>
<dbReference type="PANTHER" id="PTHR19375">
    <property type="entry name" value="HEAT SHOCK PROTEIN 70KDA"/>
    <property type="match status" value="1"/>
</dbReference>
<dbReference type="Pfam" id="PF00012">
    <property type="entry name" value="HSP70"/>
    <property type="match status" value="1"/>
</dbReference>
<dbReference type="PRINTS" id="PR00301">
    <property type="entry name" value="HEATSHOCK70"/>
</dbReference>
<dbReference type="SUPFAM" id="SSF53067">
    <property type="entry name" value="Actin-like ATPase domain"/>
    <property type="match status" value="2"/>
</dbReference>
<dbReference type="SUPFAM" id="SSF100934">
    <property type="entry name" value="Heat shock protein 70kD (HSP70), C-terminal subdomain"/>
    <property type="match status" value="1"/>
</dbReference>
<dbReference type="SUPFAM" id="SSF100920">
    <property type="entry name" value="Heat shock protein 70kD (HSP70), peptide-binding domain"/>
    <property type="match status" value="1"/>
</dbReference>
<dbReference type="PROSITE" id="PS00297">
    <property type="entry name" value="HSP70_1"/>
    <property type="match status" value="1"/>
</dbReference>
<dbReference type="PROSITE" id="PS00329">
    <property type="entry name" value="HSP70_2"/>
    <property type="match status" value="1"/>
</dbReference>
<dbReference type="PROSITE" id="PS01036">
    <property type="entry name" value="HSP70_3"/>
    <property type="match status" value="1"/>
</dbReference>
<organism>
    <name type="scientific">Salmonella newport (strain SL254)</name>
    <dbReference type="NCBI Taxonomy" id="423368"/>
    <lineage>
        <taxon>Bacteria</taxon>
        <taxon>Pseudomonadati</taxon>
        <taxon>Pseudomonadota</taxon>
        <taxon>Gammaproteobacteria</taxon>
        <taxon>Enterobacterales</taxon>
        <taxon>Enterobacteriaceae</taxon>
        <taxon>Salmonella</taxon>
    </lineage>
</organism>
<comment type="function">
    <text evidence="1">Chaperone involved in the maturation of iron-sulfur cluster-containing proteins. Has a low intrinsic ATPase activity which is markedly stimulated by HscB. Involved in the maturation of IscU.</text>
</comment>
<comment type="similarity">
    <text evidence="1">Belongs to the heat shock protein 70 family.</text>
</comment>
<keyword id="KW-0067">ATP-binding</keyword>
<keyword id="KW-0143">Chaperone</keyword>
<keyword id="KW-0547">Nucleotide-binding</keyword>
<feature type="chain" id="PRO_1000131691" description="Chaperone protein HscA">
    <location>
        <begin position="1"/>
        <end position="616"/>
    </location>
</feature>
<gene>
    <name evidence="1" type="primary">hscA</name>
    <name type="ordered locus">SNSL254_A2738</name>
</gene>
<accession>B4T0R8</accession>
<evidence type="ECO:0000255" key="1">
    <source>
        <dbReference type="HAMAP-Rule" id="MF_00679"/>
    </source>
</evidence>
<name>HSCA_SALNS</name>
<proteinExistence type="inferred from homology"/>
<protein>
    <recommendedName>
        <fullName evidence="1">Chaperone protein HscA</fullName>
    </recommendedName>
    <alternativeName>
        <fullName evidence="1">Hsc66</fullName>
    </alternativeName>
</protein>
<sequence length="616" mass="65651">MALLQISEPGLSAAPHQRRLAAGIDLGTTNSLVATVRSGQAETLPDHEGRHLLPSVVHYQQQGHTVGYAARDNAAQDTANTISSVKRMMGRSLADIQARYPHLPYRFKASVNGLPMIDTAAGLLNPVRVSADILKALAARASESLSGELDGVVITVPAYFDDAQRQGTKDAARLAGLHVLRLLNEPTAAAIAYGLDSGKEGVIAVYDLGGGTFDISILRLSRGVFEVLATGGDSALGGDDFDHLLADYIREQAGIADRSDNRVQRELLDAAITAKIALSDADTVRVNVAGWQGEITREQFNDLISALVKRTLLACRRALKDAGVEPQDVLEVVMVGGSTRVPLVRERVGEFFGRTPLTAIDPDKVVAIGAAIQADILVGNKPDSEMLLLDVIPLSLGLETMGGLVEKVIPRNTTIPVARAQDFTTFKDGQTAMSIHVMQGERELVQDCRSLARFALRGIPPLPAGGAHIRVTFQVDADGLLSVTAMEKSTGVEASIQVKPSYGLTDGEIASMIKDSMSFAEQDVKARMLAEQKVEAARVLESLTGALTADAALLSAAERQCIDDAAAHLSAVAQGDDVDAIEQAIKNVDKQTQEFAARRMDQSVRRALKGHSVDEV</sequence>
<reference key="1">
    <citation type="journal article" date="2011" name="J. Bacteriol.">
        <title>Comparative genomics of 28 Salmonella enterica isolates: evidence for CRISPR-mediated adaptive sublineage evolution.</title>
        <authorList>
            <person name="Fricke W.F."/>
            <person name="Mammel M.K."/>
            <person name="McDermott P.F."/>
            <person name="Tartera C."/>
            <person name="White D.G."/>
            <person name="Leclerc J.E."/>
            <person name="Ravel J."/>
            <person name="Cebula T.A."/>
        </authorList>
    </citation>
    <scope>NUCLEOTIDE SEQUENCE [LARGE SCALE GENOMIC DNA]</scope>
    <source>
        <strain>SL254</strain>
    </source>
</reference>